<evidence type="ECO:0000255" key="1">
    <source>
        <dbReference type="HAMAP-Rule" id="MF_00545"/>
    </source>
</evidence>
<evidence type="ECO:0000256" key="2">
    <source>
        <dbReference type="SAM" id="MobiDB-lite"/>
    </source>
</evidence>
<evidence type="ECO:0000305" key="3"/>
<name>RS24_SACS2</name>
<reference key="1">
    <citation type="journal article" date="2001" name="Proc. Natl. Acad. Sci. U.S.A.">
        <title>The complete genome of the crenarchaeon Sulfolobus solfataricus P2.</title>
        <authorList>
            <person name="She Q."/>
            <person name="Singh R.K."/>
            <person name="Confalonieri F."/>
            <person name="Zivanovic Y."/>
            <person name="Allard G."/>
            <person name="Awayez M.J."/>
            <person name="Chan-Weiher C.C.-Y."/>
            <person name="Clausen I.G."/>
            <person name="Curtis B.A."/>
            <person name="De Moors A."/>
            <person name="Erauso G."/>
            <person name="Fletcher C."/>
            <person name="Gordon P.M.K."/>
            <person name="Heikamp-de Jong I."/>
            <person name="Jeffries A.C."/>
            <person name="Kozera C.J."/>
            <person name="Medina N."/>
            <person name="Peng X."/>
            <person name="Thi-Ngoc H.P."/>
            <person name="Redder P."/>
            <person name="Schenk M.E."/>
            <person name="Theriault C."/>
            <person name="Tolstrup N."/>
            <person name="Charlebois R.L."/>
            <person name="Doolittle W.F."/>
            <person name="Duguet M."/>
            <person name="Gaasterland T."/>
            <person name="Garrett R.A."/>
            <person name="Ragan M.A."/>
            <person name="Sensen C.W."/>
            <person name="Van der Oost J."/>
        </authorList>
    </citation>
    <scope>NUCLEOTIDE SEQUENCE [LARGE SCALE GENOMIC DNA]</scope>
    <source>
        <strain>ATCC 35092 / DSM 1617 / JCM 11322 / P2</strain>
    </source>
</reference>
<organism>
    <name type="scientific">Saccharolobus solfataricus (strain ATCC 35092 / DSM 1617 / JCM 11322 / P2)</name>
    <name type="common">Sulfolobus solfataricus</name>
    <dbReference type="NCBI Taxonomy" id="273057"/>
    <lineage>
        <taxon>Archaea</taxon>
        <taxon>Thermoproteota</taxon>
        <taxon>Thermoprotei</taxon>
        <taxon>Sulfolobales</taxon>
        <taxon>Sulfolobaceae</taxon>
        <taxon>Saccharolobus</taxon>
    </lineage>
</organism>
<gene>
    <name evidence="1" type="primary">rps24e</name>
    <name type="ordered locus">SSO0435</name>
</gene>
<accession>Q97ZY6</accession>
<sequence length="120" mass="13097">MESQAKVKISDKAEGIIERDMQNSVIGRREISLKVYHMGSGTPSRKDIIKAIIQALGSQENLVVVRKISTSYGAGISNVKLHIYKSREILEKVEPKYLLDRDAGTKQKKGGSKGGQGAKG</sequence>
<feature type="chain" id="PRO_0000137656" description="Small ribosomal subunit protein eS24">
    <location>
        <begin position="1"/>
        <end position="120"/>
    </location>
</feature>
<feature type="region of interest" description="Disordered" evidence="2">
    <location>
        <begin position="101"/>
        <end position="120"/>
    </location>
</feature>
<comment type="similarity">
    <text evidence="1">Belongs to the eukaryotic ribosomal protein eS24 family.</text>
</comment>
<proteinExistence type="evidence at protein level"/>
<keyword id="KW-0002">3D-structure</keyword>
<keyword id="KW-1185">Reference proteome</keyword>
<keyword id="KW-0687">Ribonucleoprotein</keyword>
<keyword id="KW-0689">Ribosomal protein</keyword>
<dbReference type="EMBL" id="AE006641">
    <property type="protein sequence ID" value="AAK40760.1"/>
    <property type="molecule type" value="Genomic_DNA"/>
</dbReference>
<dbReference type="PIR" id="A99188">
    <property type="entry name" value="A99188"/>
</dbReference>
<dbReference type="RefSeq" id="WP_009988738.1">
    <property type="nucleotide sequence ID" value="NC_002754.1"/>
</dbReference>
<dbReference type="PDB" id="9FHL">
    <property type="method" value="EM"/>
    <property type="resolution" value="2.50 A"/>
    <property type="chains" value="V=1-120"/>
</dbReference>
<dbReference type="PDB" id="9FRA">
    <property type="method" value="EM"/>
    <property type="resolution" value="2.80 A"/>
    <property type="chains" value="V=1-120"/>
</dbReference>
<dbReference type="PDB" id="9FRK">
    <property type="method" value="EM"/>
    <property type="resolution" value="3.00 A"/>
    <property type="chains" value="V=1-120"/>
</dbReference>
<dbReference type="PDB" id="9FRL">
    <property type="method" value="EM"/>
    <property type="resolution" value="2.97 A"/>
    <property type="chains" value="V=1-120"/>
</dbReference>
<dbReference type="PDB" id="9FS6">
    <property type="method" value="EM"/>
    <property type="resolution" value="2.90 A"/>
    <property type="chains" value="V=1-120"/>
</dbReference>
<dbReference type="PDB" id="9FS8">
    <property type="method" value="EM"/>
    <property type="resolution" value="3.70 A"/>
    <property type="chains" value="V=1-120"/>
</dbReference>
<dbReference type="PDB" id="9FSF">
    <property type="method" value="EM"/>
    <property type="resolution" value="2.80 A"/>
    <property type="chains" value="V=1-120"/>
</dbReference>
<dbReference type="PDB" id="9FY0">
    <property type="method" value="EM"/>
    <property type="resolution" value="2.90 A"/>
    <property type="chains" value="V=1-120"/>
</dbReference>
<dbReference type="PDBsum" id="9FHL"/>
<dbReference type="PDBsum" id="9FRA"/>
<dbReference type="PDBsum" id="9FRK"/>
<dbReference type="PDBsum" id="9FRL"/>
<dbReference type="PDBsum" id="9FS6"/>
<dbReference type="PDBsum" id="9FS8"/>
<dbReference type="PDBsum" id="9FSF"/>
<dbReference type="PDBsum" id="9FY0"/>
<dbReference type="EMDB" id="EMD-50445"/>
<dbReference type="EMDB" id="EMD-50709"/>
<dbReference type="EMDB" id="EMD-50716"/>
<dbReference type="EMDB" id="EMD-50717"/>
<dbReference type="EMDB" id="EMD-50724"/>
<dbReference type="EMDB" id="EMD-50725"/>
<dbReference type="EMDB" id="EMD-50727"/>
<dbReference type="EMDB" id="EMD-50854"/>
<dbReference type="SMR" id="Q97ZY6"/>
<dbReference type="FunCoup" id="Q97ZY6">
    <property type="interactions" value="64"/>
</dbReference>
<dbReference type="STRING" id="273057.SSO0435"/>
<dbReference type="PaxDb" id="273057-SSO0435"/>
<dbReference type="EnsemblBacteria" id="AAK40760">
    <property type="protein sequence ID" value="AAK40760"/>
    <property type="gene ID" value="SSO0435"/>
</dbReference>
<dbReference type="KEGG" id="sso:SSO0435"/>
<dbReference type="PATRIC" id="fig|273057.12.peg.428"/>
<dbReference type="eggNOG" id="arCOG04182">
    <property type="taxonomic scope" value="Archaea"/>
</dbReference>
<dbReference type="HOGENOM" id="CLU_107248_3_2_2"/>
<dbReference type="InParanoid" id="Q97ZY6"/>
<dbReference type="PhylomeDB" id="Q97ZY6"/>
<dbReference type="Proteomes" id="UP000001974">
    <property type="component" value="Chromosome"/>
</dbReference>
<dbReference type="GO" id="GO:1990904">
    <property type="term" value="C:ribonucleoprotein complex"/>
    <property type="evidence" value="ECO:0007669"/>
    <property type="project" value="UniProtKB-KW"/>
</dbReference>
<dbReference type="GO" id="GO:0005840">
    <property type="term" value="C:ribosome"/>
    <property type="evidence" value="ECO:0007669"/>
    <property type="project" value="UniProtKB-KW"/>
</dbReference>
<dbReference type="GO" id="GO:0003735">
    <property type="term" value="F:structural constituent of ribosome"/>
    <property type="evidence" value="ECO:0007669"/>
    <property type="project" value="InterPro"/>
</dbReference>
<dbReference type="GO" id="GO:0006412">
    <property type="term" value="P:translation"/>
    <property type="evidence" value="ECO:0007669"/>
    <property type="project" value="UniProtKB-UniRule"/>
</dbReference>
<dbReference type="Gene3D" id="3.30.70.3370">
    <property type="match status" value="1"/>
</dbReference>
<dbReference type="HAMAP" id="MF_00545">
    <property type="entry name" value="Ribosomal_eS24"/>
    <property type="match status" value="1"/>
</dbReference>
<dbReference type="InterPro" id="IPR053709">
    <property type="entry name" value="eRP_eS24_sf"/>
</dbReference>
<dbReference type="InterPro" id="IPR001976">
    <property type="entry name" value="Ribosomal_eS24"/>
</dbReference>
<dbReference type="InterPro" id="IPR018098">
    <property type="entry name" value="Ribosomal_eS24_CS"/>
</dbReference>
<dbReference type="InterPro" id="IPR012678">
    <property type="entry name" value="Ribosomal_uL23/eL15/eS24_sf"/>
</dbReference>
<dbReference type="PANTHER" id="PTHR10496">
    <property type="entry name" value="40S RIBOSOMAL PROTEIN S24"/>
    <property type="match status" value="1"/>
</dbReference>
<dbReference type="Pfam" id="PF01282">
    <property type="entry name" value="Ribosomal_S24e"/>
    <property type="match status" value="1"/>
</dbReference>
<dbReference type="SUPFAM" id="SSF54189">
    <property type="entry name" value="Ribosomal proteins S24e, L23 and L15e"/>
    <property type="match status" value="1"/>
</dbReference>
<dbReference type="PROSITE" id="PS00529">
    <property type="entry name" value="RIBOSOMAL_S24E"/>
    <property type="match status" value="1"/>
</dbReference>
<protein>
    <recommendedName>
        <fullName evidence="1">Small ribosomal subunit protein eS24</fullName>
    </recommendedName>
    <alternativeName>
        <fullName evidence="3">30S ribosomal protein S24e</fullName>
    </alternativeName>
</protein>